<organism>
    <name type="scientific">Salmonella paratyphi A (strain ATCC 9150 / SARB42)</name>
    <dbReference type="NCBI Taxonomy" id="295319"/>
    <lineage>
        <taxon>Bacteria</taxon>
        <taxon>Pseudomonadati</taxon>
        <taxon>Pseudomonadota</taxon>
        <taxon>Gammaproteobacteria</taxon>
        <taxon>Enterobacterales</taxon>
        <taxon>Enterobacteriaceae</taxon>
        <taxon>Salmonella</taxon>
    </lineage>
</organism>
<evidence type="ECO:0000255" key="1">
    <source>
        <dbReference type="HAMAP-Rule" id="MF_00789"/>
    </source>
</evidence>
<sequence>MKTGALATFLALCLPVTVFATTLRLSNEVDLLVLDGKKVSSSLLRGAESIELENGPHQLVFRVEKTIRLPGNEERLYISPPLVISFDTQLISQVNFQLPRLENEREASHFNAAPRLALLDGDAMPIPVKLDILAITSTAKVVDYEIETERYNKSAKRASLPQFATMMADDSTLLSDVSELDTVPPQSQTLTEQRLKYCFRLADPQTRHHFLQWAEKQPPS</sequence>
<protein>
    <recommendedName>
        <fullName evidence="1">UPF0319 protein YccT</fullName>
    </recommendedName>
</protein>
<keyword id="KW-0732">Signal</keyword>
<feature type="signal peptide" evidence="1">
    <location>
        <begin position="1"/>
        <end position="20"/>
    </location>
</feature>
<feature type="chain" id="PRO_1000046906" description="UPF0319 protein YccT">
    <location>
        <begin position="21"/>
        <end position="220"/>
    </location>
</feature>
<proteinExistence type="inferred from homology"/>
<accession>Q5PGC7</accession>
<dbReference type="EMBL" id="CP000026">
    <property type="protein sequence ID" value="AAV77689.1"/>
    <property type="molecule type" value="Genomic_DNA"/>
</dbReference>
<dbReference type="RefSeq" id="WP_000847717.1">
    <property type="nucleotide sequence ID" value="NC_006511.1"/>
</dbReference>
<dbReference type="KEGG" id="spt:SPA1773"/>
<dbReference type="HOGENOM" id="CLU_073782_2_0_6"/>
<dbReference type="Proteomes" id="UP000008185">
    <property type="component" value="Chromosome"/>
</dbReference>
<dbReference type="HAMAP" id="MF_00789">
    <property type="entry name" value="UPF0319"/>
    <property type="match status" value="1"/>
</dbReference>
<dbReference type="InterPro" id="IPR018635">
    <property type="entry name" value="UPF0319"/>
</dbReference>
<dbReference type="NCBIfam" id="NF047712">
    <property type="entry name" value="CrliSynInhib"/>
    <property type="match status" value="1"/>
</dbReference>
<dbReference type="NCBIfam" id="NF002967">
    <property type="entry name" value="PRK03641.1"/>
    <property type="match status" value="1"/>
</dbReference>
<dbReference type="PANTHER" id="PTHR38108">
    <property type="entry name" value="UPF0319 PROTEIN YCCT"/>
    <property type="match status" value="1"/>
</dbReference>
<dbReference type="PANTHER" id="PTHR38108:SF1">
    <property type="entry name" value="UPF0319 PROTEIN YCCT"/>
    <property type="match status" value="1"/>
</dbReference>
<dbReference type="Pfam" id="PF09829">
    <property type="entry name" value="DUF2057"/>
    <property type="match status" value="1"/>
</dbReference>
<gene>
    <name evidence="1" type="primary">yccT</name>
    <name type="ordered locus">SPA1773</name>
</gene>
<comment type="similarity">
    <text evidence="1">Belongs to the UPF0319 family.</text>
</comment>
<name>YCCT_SALPA</name>
<reference key="1">
    <citation type="journal article" date="2004" name="Nat. Genet.">
        <title>Comparison of genome degradation in Paratyphi A and Typhi, human-restricted serovars of Salmonella enterica that cause typhoid.</title>
        <authorList>
            <person name="McClelland M."/>
            <person name="Sanderson K.E."/>
            <person name="Clifton S.W."/>
            <person name="Latreille P."/>
            <person name="Porwollik S."/>
            <person name="Sabo A."/>
            <person name="Meyer R."/>
            <person name="Bieri T."/>
            <person name="Ozersky P."/>
            <person name="McLellan M."/>
            <person name="Harkins C.R."/>
            <person name="Wang C."/>
            <person name="Nguyen C."/>
            <person name="Berghoff A."/>
            <person name="Elliott G."/>
            <person name="Kohlberg S."/>
            <person name="Strong C."/>
            <person name="Du F."/>
            <person name="Carter J."/>
            <person name="Kremizki C."/>
            <person name="Layman D."/>
            <person name="Leonard S."/>
            <person name="Sun H."/>
            <person name="Fulton L."/>
            <person name="Nash W."/>
            <person name="Miner T."/>
            <person name="Minx P."/>
            <person name="Delehaunty K."/>
            <person name="Fronick C."/>
            <person name="Magrini V."/>
            <person name="Nhan M."/>
            <person name="Warren W."/>
            <person name="Florea L."/>
            <person name="Spieth J."/>
            <person name="Wilson R.K."/>
        </authorList>
    </citation>
    <scope>NUCLEOTIDE SEQUENCE [LARGE SCALE GENOMIC DNA]</scope>
    <source>
        <strain>ATCC 9150 / SARB42</strain>
    </source>
</reference>